<organism>
    <name type="scientific">Xylella fastidiosa (strain 9a5c)</name>
    <dbReference type="NCBI Taxonomy" id="160492"/>
    <lineage>
        <taxon>Bacteria</taxon>
        <taxon>Pseudomonadati</taxon>
        <taxon>Pseudomonadota</taxon>
        <taxon>Gammaproteobacteria</taxon>
        <taxon>Lysobacterales</taxon>
        <taxon>Lysobacteraceae</taxon>
        <taxon>Xylella</taxon>
    </lineage>
</organism>
<evidence type="ECO:0000250" key="1"/>
<evidence type="ECO:0000305" key="2"/>
<name>TRPR_XYLFA</name>
<protein>
    <recommendedName>
        <fullName>Trp operon repressor homolog</fullName>
    </recommendedName>
</protein>
<keyword id="KW-0963">Cytoplasm</keyword>
<keyword id="KW-0238">DNA-binding</keyword>
<keyword id="KW-0678">Repressor</keyword>
<keyword id="KW-0804">Transcription</keyword>
<keyword id="KW-0805">Transcription regulation</keyword>
<comment type="function">
    <text evidence="1">This protein is an aporepressor. When complexed with L-tryptophan it binds the operator region of the trp operon and prevents the initiation of transcription (By similarity).</text>
</comment>
<comment type="subunit">
    <text evidence="1">Homodimer.</text>
</comment>
<comment type="subcellular location">
    <subcellularLocation>
        <location evidence="1">Cytoplasm</location>
    </subcellularLocation>
</comment>
<comment type="similarity">
    <text evidence="2">Belongs to the TrpR family.</text>
</comment>
<sequence length="92" mass="10683">MSREQAFEMLIKILCKTDSTDDMKLILECILTRSEMEDLIDRIRIYNELLNTNNSQREVASKLGVSITKITRGAANLQDNNIKDFLRKKISY</sequence>
<feature type="chain" id="PRO_0000196518" description="Trp operon repressor homolog">
    <location>
        <begin position="1"/>
        <end position="92"/>
    </location>
</feature>
<feature type="DNA-binding region" evidence="1">
    <location>
        <begin position="56"/>
        <end position="78"/>
    </location>
</feature>
<gene>
    <name type="primary">trpR</name>
    <name type="ordered locus">XF_1920</name>
</gene>
<dbReference type="EMBL" id="AE003849">
    <property type="protein sequence ID" value="AAF84726.1"/>
    <property type="molecule type" value="Genomic_DNA"/>
</dbReference>
<dbReference type="PIR" id="H82622">
    <property type="entry name" value="H82622"/>
</dbReference>
<dbReference type="RefSeq" id="WP_010894386.1">
    <property type="nucleotide sequence ID" value="NC_002488.3"/>
</dbReference>
<dbReference type="SMR" id="Q9PC61"/>
<dbReference type="STRING" id="160492.XF_1920"/>
<dbReference type="KEGG" id="xfa:XF_1920"/>
<dbReference type="eggNOG" id="COG2973">
    <property type="taxonomic scope" value="Bacteria"/>
</dbReference>
<dbReference type="HOGENOM" id="CLU_2573116_0_0_6"/>
<dbReference type="Proteomes" id="UP000000812">
    <property type="component" value="Chromosome"/>
</dbReference>
<dbReference type="GO" id="GO:0005737">
    <property type="term" value="C:cytoplasm"/>
    <property type="evidence" value="ECO:0007669"/>
    <property type="project" value="UniProtKB-SubCell"/>
</dbReference>
<dbReference type="GO" id="GO:0003700">
    <property type="term" value="F:DNA-binding transcription factor activity"/>
    <property type="evidence" value="ECO:0007669"/>
    <property type="project" value="InterPro"/>
</dbReference>
<dbReference type="GO" id="GO:0043565">
    <property type="term" value="F:sequence-specific DNA binding"/>
    <property type="evidence" value="ECO:0007669"/>
    <property type="project" value="InterPro"/>
</dbReference>
<dbReference type="GO" id="GO:0045892">
    <property type="term" value="P:negative regulation of DNA-templated transcription"/>
    <property type="evidence" value="ECO:0007669"/>
    <property type="project" value="UniProtKB-UniRule"/>
</dbReference>
<dbReference type="Gene3D" id="1.10.1270.10">
    <property type="entry name" value="TrpR-like"/>
    <property type="match status" value="1"/>
</dbReference>
<dbReference type="HAMAP" id="MF_00475">
    <property type="entry name" value="Trp_repressor"/>
    <property type="match status" value="1"/>
</dbReference>
<dbReference type="InterPro" id="IPR000831">
    <property type="entry name" value="Trp_repress"/>
</dbReference>
<dbReference type="InterPro" id="IPR013335">
    <property type="entry name" value="Trp_repress_bac"/>
</dbReference>
<dbReference type="InterPro" id="IPR010921">
    <property type="entry name" value="Trp_repressor/repl_initiator"/>
</dbReference>
<dbReference type="InterPro" id="IPR038116">
    <property type="entry name" value="TrpR-like_sf"/>
</dbReference>
<dbReference type="NCBIfam" id="TIGR01321">
    <property type="entry name" value="TrpR"/>
    <property type="match status" value="1"/>
</dbReference>
<dbReference type="PANTHER" id="PTHR38025">
    <property type="entry name" value="TRP OPERON REPRESSOR"/>
    <property type="match status" value="1"/>
</dbReference>
<dbReference type="PANTHER" id="PTHR38025:SF1">
    <property type="entry name" value="TRP OPERON REPRESSOR"/>
    <property type="match status" value="1"/>
</dbReference>
<dbReference type="Pfam" id="PF01371">
    <property type="entry name" value="Trp_repressor"/>
    <property type="match status" value="1"/>
</dbReference>
<dbReference type="PIRSF" id="PIRSF003196">
    <property type="entry name" value="Trp_repressor"/>
    <property type="match status" value="1"/>
</dbReference>
<dbReference type="SUPFAM" id="SSF48295">
    <property type="entry name" value="TrpR-like"/>
    <property type="match status" value="1"/>
</dbReference>
<accession>Q9PC61</accession>
<proteinExistence type="inferred from homology"/>
<reference key="1">
    <citation type="journal article" date="2000" name="Nature">
        <title>The genome sequence of the plant pathogen Xylella fastidiosa.</title>
        <authorList>
            <person name="Simpson A.J.G."/>
            <person name="Reinach F.C."/>
            <person name="Arruda P."/>
            <person name="Abreu F.A."/>
            <person name="Acencio M."/>
            <person name="Alvarenga R."/>
            <person name="Alves L.M.C."/>
            <person name="Araya J.E."/>
            <person name="Baia G.S."/>
            <person name="Baptista C.S."/>
            <person name="Barros M.H."/>
            <person name="Bonaccorsi E.D."/>
            <person name="Bordin S."/>
            <person name="Bove J.M."/>
            <person name="Briones M.R.S."/>
            <person name="Bueno M.R.P."/>
            <person name="Camargo A.A."/>
            <person name="Camargo L.E.A."/>
            <person name="Carraro D.M."/>
            <person name="Carrer H."/>
            <person name="Colauto N.B."/>
            <person name="Colombo C."/>
            <person name="Costa F.F."/>
            <person name="Costa M.C.R."/>
            <person name="Costa-Neto C.M."/>
            <person name="Coutinho L.L."/>
            <person name="Cristofani M."/>
            <person name="Dias-Neto E."/>
            <person name="Docena C."/>
            <person name="El-Dorry H."/>
            <person name="Facincani A.P."/>
            <person name="Ferreira A.J.S."/>
            <person name="Ferreira V.C.A."/>
            <person name="Ferro J.A."/>
            <person name="Fraga J.S."/>
            <person name="Franca S.C."/>
            <person name="Franco M.C."/>
            <person name="Frohme M."/>
            <person name="Furlan L.R."/>
            <person name="Garnier M."/>
            <person name="Goldman G.H."/>
            <person name="Goldman M.H.S."/>
            <person name="Gomes S.L."/>
            <person name="Gruber A."/>
            <person name="Ho P.L."/>
            <person name="Hoheisel J.D."/>
            <person name="Junqueira M.L."/>
            <person name="Kemper E.L."/>
            <person name="Kitajima J.P."/>
            <person name="Krieger J.E."/>
            <person name="Kuramae E.E."/>
            <person name="Laigret F."/>
            <person name="Lambais M.R."/>
            <person name="Leite L.C.C."/>
            <person name="Lemos E.G.M."/>
            <person name="Lemos M.V.F."/>
            <person name="Lopes S.A."/>
            <person name="Lopes C.R."/>
            <person name="Machado J.A."/>
            <person name="Machado M.A."/>
            <person name="Madeira A.M.B.N."/>
            <person name="Madeira H.M.F."/>
            <person name="Marino C.L."/>
            <person name="Marques M.V."/>
            <person name="Martins E.A.L."/>
            <person name="Martins E.M.F."/>
            <person name="Matsukuma A.Y."/>
            <person name="Menck C.F.M."/>
            <person name="Miracca E.C."/>
            <person name="Miyaki C.Y."/>
            <person name="Monteiro-Vitorello C.B."/>
            <person name="Moon D.H."/>
            <person name="Nagai M.A."/>
            <person name="Nascimento A.L.T.O."/>
            <person name="Netto L.E.S."/>
            <person name="Nhani A. Jr."/>
            <person name="Nobrega F.G."/>
            <person name="Nunes L.R."/>
            <person name="Oliveira M.A."/>
            <person name="de Oliveira M.C."/>
            <person name="de Oliveira R.C."/>
            <person name="Palmieri D.A."/>
            <person name="Paris A."/>
            <person name="Peixoto B.R."/>
            <person name="Pereira G.A.G."/>
            <person name="Pereira H.A. Jr."/>
            <person name="Pesquero J.B."/>
            <person name="Quaggio R.B."/>
            <person name="Roberto P.G."/>
            <person name="Rodrigues V."/>
            <person name="de Rosa A.J.M."/>
            <person name="de Rosa V.E. Jr."/>
            <person name="de Sa R.G."/>
            <person name="Santelli R.V."/>
            <person name="Sawasaki H.E."/>
            <person name="da Silva A.C.R."/>
            <person name="da Silva A.M."/>
            <person name="da Silva F.R."/>
            <person name="Silva W.A. Jr."/>
            <person name="da Silveira J.F."/>
            <person name="Silvestri M.L.Z."/>
            <person name="Siqueira W.J."/>
            <person name="de Souza A.A."/>
            <person name="de Souza A.P."/>
            <person name="Terenzi M.F."/>
            <person name="Truffi D."/>
            <person name="Tsai S.M."/>
            <person name="Tsuhako M.H."/>
            <person name="Vallada H."/>
            <person name="Van Sluys M.A."/>
            <person name="Verjovski-Almeida S."/>
            <person name="Vettore A.L."/>
            <person name="Zago M.A."/>
            <person name="Zatz M."/>
            <person name="Meidanis J."/>
            <person name="Setubal J.C."/>
        </authorList>
    </citation>
    <scope>NUCLEOTIDE SEQUENCE [LARGE SCALE GENOMIC DNA]</scope>
    <source>
        <strain>9a5c</strain>
    </source>
</reference>